<organism>
    <name type="scientific">Lagothrix lagotricha</name>
    <name type="common">Brown woolly monkey</name>
    <name type="synonym">Humboldt's woolly monkey</name>
    <dbReference type="NCBI Taxonomy" id="9519"/>
    <lineage>
        <taxon>Eukaryota</taxon>
        <taxon>Metazoa</taxon>
        <taxon>Chordata</taxon>
        <taxon>Craniata</taxon>
        <taxon>Vertebrata</taxon>
        <taxon>Euteleostomi</taxon>
        <taxon>Mammalia</taxon>
        <taxon>Eutheria</taxon>
        <taxon>Euarchontoglires</taxon>
        <taxon>Primates</taxon>
        <taxon>Haplorrhini</taxon>
        <taxon>Platyrrhini</taxon>
        <taxon>Atelidae</taxon>
        <taxon>Atelinae</taxon>
        <taxon>Lagothrix</taxon>
    </lineage>
</organism>
<evidence type="ECO:0000250" key="1">
    <source>
        <dbReference type="UniProtKB" id="F6Q1T7"/>
    </source>
</evidence>
<evidence type="ECO:0000250" key="2">
    <source>
        <dbReference type="UniProtKB" id="O09160"/>
    </source>
</evidence>
<evidence type="ECO:0000250" key="3">
    <source>
        <dbReference type="UniProtKB" id="P19526"/>
    </source>
</evidence>
<evidence type="ECO:0000255" key="4"/>
<evidence type="ECO:0000305" key="5"/>
<accession>Q866C9</accession>
<feature type="chain" id="PRO_0000149096" description="Galactoside alpha-(1,2)-fucosyltransferase 1">
    <location>
        <begin position="1"/>
        <end position="366"/>
    </location>
</feature>
<feature type="topological domain" description="Cytoplasmic" evidence="4">
    <location>
        <begin position="1"/>
        <end position="8"/>
    </location>
</feature>
<feature type="transmembrane region" description="Helical; Signal-anchor for type II membrane protein" evidence="4">
    <location>
        <begin position="9"/>
        <end position="25"/>
    </location>
</feature>
<feature type="topological domain" description="Lumenal" evidence="4">
    <location>
        <begin position="26"/>
        <end position="366"/>
    </location>
</feature>
<feature type="glycosylation site" description="N-linked (GlcNAc...) asparagine" evidence="4">
    <location>
        <position position="66"/>
    </location>
</feature>
<feature type="glycosylation site" description="N-linked (GlcNAc...) asparagine" evidence="4">
    <location>
        <position position="302"/>
    </location>
</feature>
<feature type="glycosylation site" description="N-linked (GlcNAc...) asparagine" evidence="4">
    <location>
        <position position="328"/>
    </location>
</feature>
<name>FUT1_LAGLA</name>
<dbReference type="EC" id="2.4.1.69" evidence="2"/>
<dbReference type="EC" id="2.4.1.344" evidence="3"/>
<dbReference type="EMBL" id="AY219639">
    <property type="protein sequence ID" value="AAO43081.1"/>
    <property type="molecule type" value="Genomic_DNA"/>
</dbReference>
<dbReference type="SMR" id="Q866C9"/>
<dbReference type="CAZy" id="GT11">
    <property type="family name" value="Glycosyltransferase Family 11"/>
</dbReference>
<dbReference type="GlyCosmos" id="Q866C9">
    <property type="glycosylation" value="3 sites, No reported glycans"/>
</dbReference>
<dbReference type="UniPathway" id="UPA00378"/>
<dbReference type="GO" id="GO:0032580">
    <property type="term" value="C:Golgi cisterna membrane"/>
    <property type="evidence" value="ECO:0007669"/>
    <property type="project" value="UniProtKB-SubCell"/>
</dbReference>
<dbReference type="GO" id="GO:0031127">
    <property type="term" value="F:alpha-(1,2)-fucosyltransferase activity"/>
    <property type="evidence" value="ECO:0000250"/>
    <property type="project" value="UniProtKB"/>
</dbReference>
<dbReference type="GO" id="GO:0008107">
    <property type="term" value="F:galactoside 2-alpha-L-fucosyltransferase activity"/>
    <property type="evidence" value="ECO:0007669"/>
    <property type="project" value="UniProtKB-EC"/>
</dbReference>
<dbReference type="GO" id="GO:0005975">
    <property type="term" value="P:carbohydrate metabolic process"/>
    <property type="evidence" value="ECO:0007669"/>
    <property type="project" value="InterPro"/>
</dbReference>
<dbReference type="GO" id="GO:0036065">
    <property type="term" value="P:fucosylation"/>
    <property type="evidence" value="ECO:0000250"/>
    <property type="project" value="UniProtKB"/>
</dbReference>
<dbReference type="GO" id="GO:0006629">
    <property type="term" value="P:lipid metabolic process"/>
    <property type="evidence" value="ECO:0007669"/>
    <property type="project" value="UniProtKB-KW"/>
</dbReference>
<dbReference type="GO" id="GO:0021772">
    <property type="term" value="P:olfactory bulb development"/>
    <property type="evidence" value="ECO:0000250"/>
    <property type="project" value="UniProtKB"/>
</dbReference>
<dbReference type="GO" id="GO:0001954">
    <property type="term" value="P:positive regulation of cell-matrix adhesion"/>
    <property type="evidence" value="ECO:0000250"/>
    <property type="project" value="UniProtKB"/>
</dbReference>
<dbReference type="GO" id="GO:0010595">
    <property type="term" value="P:positive regulation of endothelial cell migration"/>
    <property type="evidence" value="ECO:0000250"/>
    <property type="project" value="UniProtKB"/>
</dbReference>
<dbReference type="GO" id="GO:1904906">
    <property type="term" value="P:positive regulation of endothelial cell-matrix adhesion via fibronectin"/>
    <property type="evidence" value="ECO:0000250"/>
    <property type="project" value="UniProtKB"/>
</dbReference>
<dbReference type="GO" id="GO:1903672">
    <property type="term" value="P:positive regulation of sprouting angiogenesis"/>
    <property type="evidence" value="ECO:0000250"/>
    <property type="project" value="UniProtKB"/>
</dbReference>
<dbReference type="GO" id="GO:0006486">
    <property type="term" value="P:protein glycosylation"/>
    <property type="evidence" value="ECO:0000250"/>
    <property type="project" value="UniProtKB"/>
</dbReference>
<dbReference type="GO" id="GO:0030155">
    <property type="term" value="P:regulation of cell adhesion"/>
    <property type="evidence" value="ECO:0000250"/>
    <property type="project" value="UniProtKB"/>
</dbReference>
<dbReference type="GO" id="GO:0001936">
    <property type="term" value="P:regulation of endothelial cell proliferation"/>
    <property type="evidence" value="ECO:0000250"/>
    <property type="project" value="UniProtKB"/>
</dbReference>
<dbReference type="CDD" id="cd11301">
    <property type="entry name" value="Fut1_Fut2_like"/>
    <property type="match status" value="1"/>
</dbReference>
<dbReference type="InterPro" id="IPR002516">
    <property type="entry name" value="Glyco_trans_11"/>
</dbReference>
<dbReference type="PANTHER" id="PTHR11927">
    <property type="entry name" value="GALACTOSIDE 2-L-FUCOSYLTRANSFERASE"/>
    <property type="match status" value="1"/>
</dbReference>
<dbReference type="PANTHER" id="PTHR11927:SF4">
    <property type="entry name" value="GALACTOSIDE ALPHA-(1,2)-FUCOSYLTRANSFERASE 1"/>
    <property type="match status" value="1"/>
</dbReference>
<dbReference type="Pfam" id="PF01531">
    <property type="entry name" value="Glyco_transf_11"/>
    <property type="match status" value="1"/>
</dbReference>
<comment type="function">
    <text evidence="2 3">Catalyzes the transfer of L-fucose, from a guanosine diphosphate-beta-L-fucose, to the terminal galactose residue of glycoconjugates through an alpha(1,2) linkage leading to H antigen synthesis that is an intermediate substrate in the synthesis of ABO blood group antigens. H antigen is essential for maturation of the glomerular layer of the main olfactory bulb, in cell migration and early cell-cell contacts during tumor associated angiogenesis (By similarity). Preferentially fucosylates soluble lactose and to a lesser extent fucosylates glycolipids gangliosides GA1 and GM1a (By similarity).</text>
</comment>
<comment type="catalytic activity">
    <reaction evidence="3">
        <text>a beta-D-galactosyl-(1-&gt;4)-N-acetyl-beta-D-glucosaminyl derivative + GDP-beta-L-fucose = an alpha-L-Fuc-(1-&gt;2)-beta-D-Gal-(1-&gt;4)-beta-D-GlcNAc derivative + GDP + H(+)</text>
        <dbReference type="Rhea" id="RHEA:50668"/>
        <dbReference type="ChEBI" id="CHEBI:15378"/>
        <dbReference type="ChEBI" id="CHEBI:57273"/>
        <dbReference type="ChEBI" id="CHEBI:58189"/>
        <dbReference type="ChEBI" id="CHEBI:133507"/>
        <dbReference type="ChEBI" id="CHEBI:133510"/>
        <dbReference type="EC" id="2.4.1.344"/>
    </reaction>
</comment>
<comment type="catalytic activity">
    <reaction evidence="2">
        <text>a ganglioside GA1 + GDP-beta-L-fucose = a ganglioside Fuc-GA1 + GDP + H(+)</text>
        <dbReference type="Rhea" id="RHEA:48320"/>
        <dbReference type="ChEBI" id="CHEBI:15378"/>
        <dbReference type="ChEBI" id="CHEBI:57273"/>
        <dbReference type="ChEBI" id="CHEBI:58189"/>
        <dbReference type="ChEBI" id="CHEBI:88069"/>
        <dbReference type="ChEBI" id="CHEBI:90262"/>
    </reaction>
    <physiologicalReaction direction="left-to-right" evidence="2">
        <dbReference type="Rhea" id="RHEA:48321"/>
    </physiologicalReaction>
</comment>
<comment type="catalytic activity">
    <reaction evidence="2">
        <text>a beta-D-Gal-(1-&gt;3)-beta-D-GlcNAc-(1-&gt;3)-beta-D-Gal-(1-&gt;4)-beta-D-Glc-(1&lt;-&gt;1')-Cer(d18:1(4E)) + GDP-beta-L-fucose = alpha-L-fucosyl-(1-&gt;2)- beta-D-galactosyl-(1-&gt;3)-N-acetyl-beta-D-glucosaminyl-(1-&gt;3)-beta-D-galactosyl-(1-&gt;4)-beta-D-glucosyl-(1&lt;-&gt;1')-N-acylsphing-4-enine + GDP + H(+)</text>
        <dbReference type="Rhea" id="RHEA:32175"/>
        <dbReference type="ChEBI" id="CHEBI:15378"/>
        <dbReference type="ChEBI" id="CHEBI:17292"/>
        <dbReference type="ChEBI" id="CHEBI:28743"/>
        <dbReference type="ChEBI" id="CHEBI:57273"/>
        <dbReference type="ChEBI" id="CHEBI:58189"/>
        <dbReference type="EC" id="2.4.1.69"/>
    </reaction>
    <physiologicalReaction direction="left-to-right" evidence="2">
        <dbReference type="Rhea" id="RHEA:32176"/>
    </physiologicalReaction>
</comment>
<comment type="catalytic activity">
    <reaction evidence="2">
        <text>a neolactoside nLc4Cer(d18:1(4E)) + GDP-beta-L-fucose = a neolactoside IV(2)-alpha-Fuc-nLc4Cer(d18:1(4E)) + GDP + H(+)</text>
        <dbReference type="Rhea" id="RHEA:48304"/>
        <dbReference type="ChEBI" id="CHEBI:15378"/>
        <dbReference type="ChEBI" id="CHEBI:17006"/>
        <dbReference type="ChEBI" id="CHEBI:28691"/>
        <dbReference type="ChEBI" id="CHEBI:57273"/>
        <dbReference type="ChEBI" id="CHEBI:58189"/>
    </reaction>
    <physiologicalReaction direction="left-to-right" evidence="2">
        <dbReference type="Rhea" id="RHEA:48305"/>
    </physiologicalReaction>
</comment>
<comment type="catalytic activity">
    <reaction evidence="1">
        <text>a ganglioside GM1 + GDP-beta-L-fucose = a ganglioside Fuc-GM1 + GDP + H(+)</text>
        <dbReference type="Rhea" id="RHEA:48292"/>
        <dbReference type="ChEBI" id="CHEBI:15378"/>
        <dbReference type="ChEBI" id="CHEBI:57273"/>
        <dbReference type="ChEBI" id="CHEBI:58189"/>
        <dbReference type="ChEBI" id="CHEBI:82639"/>
        <dbReference type="ChEBI" id="CHEBI:90189"/>
    </reaction>
    <physiologicalReaction direction="left-to-right" evidence="1">
        <dbReference type="Rhea" id="RHEA:48293"/>
    </physiologicalReaction>
</comment>
<comment type="catalytic activity">
    <reaction evidence="1">
        <text>beta-D-galactosyl-(1-&gt;3)-N-acetyl-D-galactosamine + GDP-beta-L-fucose = alpha-L-fucosyl-(1-&gt;2)-beta-D-galactosyl-(1-&gt;3)-N-acetyl-D-galactosamine + GDP + H(+)</text>
        <dbReference type="Rhea" id="RHEA:62964"/>
        <dbReference type="ChEBI" id="CHEBI:15378"/>
        <dbReference type="ChEBI" id="CHEBI:57273"/>
        <dbReference type="ChEBI" id="CHEBI:58189"/>
        <dbReference type="ChEBI" id="CHEBI:84728"/>
        <dbReference type="ChEBI" id="CHEBI:546807"/>
    </reaction>
    <physiologicalReaction direction="left-to-right" evidence="1">
        <dbReference type="Rhea" id="RHEA:62965"/>
    </physiologicalReaction>
</comment>
<comment type="pathway">
    <text evidence="3">Protein modification; protein glycosylation.</text>
</comment>
<comment type="subcellular location">
    <subcellularLocation>
        <location evidence="2">Golgi apparatus</location>
        <location evidence="2">Golgi stack membrane</location>
        <topology evidence="2">Single-pass type II membrane protein</topology>
    </subcellularLocation>
    <text evidence="2">Membrane-bound form in trans cisternae of Golgi.</text>
</comment>
<comment type="similarity">
    <text evidence="5">Belongs to the glycosyltransferase 11 family.</text>
</comment>
<keyword id="KW-0325">Glycoprotein</keyword>
<keyword id="KW-0328">Glycosyltransferase</keyword>
<keyword id="KW-0333">Golgi apparatus</keyword>
<keyword id="KW-0443">Lipid metabolism</keyword>
<keyword id="KW-0472">Membrane</keyword>
<keyword id="KW-0735">Signal-anchor</keyword>
<keyword id="KW-0808">Transferase</keyword>
<keyword id="KW-0812">Transmembrane</keyword>
<keyword id="KW-1133">Transmembrane helix</keyword>
<gene>
    <name evidence="3" type="primary">FUT1</name>
</gene>
<protein>
    <recommendedName>
        <fullName evidence="3">Galactoside alpha-(1,2)-fucosyltransferase 1</fullName>
    </recommendedName>
    <alternativeName>
        <fullName>Alpha(1,2)FT 1</fullName>
    </alternativeName>
    <alternativeName>
        <fullName>Fucosyltransferase 1</fullName>
    </alternativeName>
    <alternativeName>
        <fullName>GDP-L-fucose:beta-D-galactoside 2-alpha-L-fucosyltransferase 1</fullName>
    </alternativeName>
    <alternativeName>
        <fullName evidence="2">Type 1 galactoside alpha-(1,2)-fucosyltransferase FUT1</fullName>
        <ecNumber evidence="2">2.4.1.69</ecNumber>
    </alternativeName>
    <alternativeName>
        <fullName evidence="3">Type 2 galactoside alpha-(1,2)-fucosyltransferase FUT1</fullName>
        <ecNumber evidence="3">2.4.1.344</ecNumber>
    </alternativeName>
</protein>
<proteinExistence type="inferred from homology"/>
<sequence>MWPLSHRHLCLAFLLVCVLSAISFFLHIHQDSFPHGLGLSVLCPDRRLVTHPVAIFCLPGTPMSPNTSSPCPQHAASLSGTWTIYPDGRFGNQMGQYATLLALAQLNGRQAFILPAMHAALAPVFRITLPVLAPEVDSRTPWRELRLHDWMSEEYADLGDPFLKLSGFPCSWTFFHHLREQIRSEFTLHDHLREEAQSVLRRLHLGRSGDRPRTFVGVHVRRGDYLQVMPQRWRGVVGNSAYLREAMDWFRARHEAPVFVVTSNGMEWCRENIDASKGDVVFAGDGQEASPWKDFALLTQCNHTIMTIGTFGFWAAYLAGGDTVYLANFTLPDSEFLKIFKPEAAFLPEWVGINADLSPLWTLAEP</sequence>
<reference key="1">
    <citation type="submission" date="2003-01" db="EMBL/GenBank/DDBJ databases">
        <title>Molecular evolution of the H (FUT1) gene in New World monkeys (Primates, Platyrrhini): evidence of divergent evolution and purifying selection.</title>
        <authorList>
            <person name="Borges B.N."/>
            <person name="Harada M.L."/>
        </authorList>
    </citation>
    <scope>NUCLEOTIDE SEQUENCE [GENOMIC DNA]</scope>
</reference>